<reference key="1">
    <citation type="journal article" date="2000" name="Nature">
        <title>Sequence and analysis of chromosome 1 of the plant Arabidopsis thaliana.</title>
        <authorList>
            <person name="Theologis A."/>
            <person name="Ecker J.R."/>
            <person name="Palm C.J."/>
            <person name="Federspiel N.A."/>
            <person name="Kaul S."/>
            <person name="White O."/>
            <person name="Alonso J."/>
            <person name="Altafi H."/>
            <person name="Araujo R."/>
            <person name="Bowman C.L."/>
            <person name="Brooks S.Y."/>
            <person name="Buehler E."/>
            <person name="Chan A."/>
            <person name="Chao Q."/>
            <person name="Chen H."/>
            <person name="Cheuk R.F."/>
            <person name="Chin C.W."/>
            <person name="Chung M.K."/>
            <person name="Conn L."/>
            <person name="Conway A.B."/>
            <person name="Conway A.R."/>
            <person name="Creasy T.H."/>
            <person name="Dewar K."/>
            <person name="Dunn P."/>
            <person name="Etgu P."/>
            <person name="Feldblyum T.V."/>
            <person name="Feng J.-D."/>
            <person name="Fong B."/>
            <person name="Fujii C.Y."/>
            <person name="Gill J.E."/>
            <person name="Goldsmith A.D."/>
            <person name="Haas B."/>
            <person name="Hansen N.F."/>
            <person name="Hughes B."/>
            <person name="Huizar L."/>
            <person name="Hunter J.L."/>
            <person name="Jenkins J."/>
            <person name="Johnson-Hopson C."/>
            <person name="Khan S."/>
            <person name="Khaykin E."/>
            <person name="Kim C.J."/>
            <person name="Koo H.L."/>
            <person name="Kremenetskaia I."/>
            <person name="Kurtz D.B."/>
            <person name="Kwan A."/>
            <person name="Lam B."/>
            <person name="Langin-Hooper S."/>
            <person name="Lee A."/>
            <person name="Lee J.M."/>
            <person name="Lenz C.A."/>
            <person name="Li J.H."/>
            <person name="Li Y.-P."/>
            <person name="Lin X."/>
            <person name="Liu S.X."/>
            <person name="Liu Z.A."/>
            <person name="Luros J.S."/>
            <person name="Maiti R."/>
            <person name="Marziali A."/>
            <person name="Militscher J."/>
            <person name="Miranda M."/>
            <person name="Nguyen M."/>
            <person name="Nierman W.C."/>
            <person name="Osborne B.I."/>
            <person name="Pai G."/>
            <person name="Peterson J."/>
            <person name="Pham P.K."/>
            <person name="Rizzo M."/>
            <person name="Rooney T."/>
            <person name="Rowley D."/>
            <person name="Sakano H."/>
            <person name="Salzberg S.L."/>
            <person name="Schwartz J.R."/>
            <person name="Shinn P."/>
            <person name="Southwick A.M."/>
            <person name="Sun H."/>
            <person name="Tallon L.J."/>
            <person name="Tambunga G."/>
            <person name="Toriumi M.J."/>
            <person name="Town C.D."/>
            <person name="Utterback T."/>
            <person name="Van Aken S."/>
            <person name="Vaysberg M."/>
            <person name="Vysotskaia V.S."/>
            <person name="Walker M."/>
            <person name="Wu D."/>
            <person name="Yu G."/>
            <person name="Fraser C.M."/>
            <person name="Venter J.C."/>
            <person name="Davis R.W."/>
        </authorList>
    </citation>
    <scope>NUCLEOTIDE SEQUENCE [LARGE SCALE GENOMIC DNA]</scope>
    <source>
        <strain>cv. Columbia</strain>
    </source>
</reference>
<reference key="2">
    <citation type="journal article" date="2017" name="Plant J.">
        <title>Araport11: a complete reannotation of the Arabidopsis thaliana reference genome.</title>
        <authorList>
            <person name="Cheng C.Y."/>
            <person name="Krishnakumar V."/>
            <person name="Chan A.P."/>
            <person name="Thibaud-Nissen F."/>
            <person name="Schobel S."/>
            <person name="Town C.D."/>
        </authorList>
    </citation>
    <scope>GENOME REANNOTATION</scope>
    <source>
        <strain>cv. Columbia</strain>
    </source>
</reference>
<reference key="3">
    <citation type="submission" date="2002-03" db="EMBL/GenBank/DDBJ databases">
        <title>Full-length cDNA from Arabidopsis thaliana.</title>
        <authorList>
            <person name="Brover V.V."/>
            <person name="Troukhan M.E."/>
            <person name="Alexandrov N.A."/>
            <person name="Lu Y.-P."/>
            <person name="Flavell R.B."/>
            <person name="Feldmann K.A."/>
        </authorList>
    </citation>
    <scope>NUCLEOTIDE SEQUENCE [LARGE SCALE MRNA]</scope>
</reference>
<reference key="4">
    <citation type="submission" date="2006-03" db="EMBL/GenBank/DDBJ databases">
        <title>Arabidopsis ORF clones.</title>
        <authorList>
            <person name="Shinn P."/>
            <person name="Chen H."/>
            <person name="Kim C.J."/>
            <person name="Ecker J.R."/>
        </authorList>
    </citation>
    <scope>NUCLEOTIDE SEQUENCE [LARGE SCALE MRNA]</scope>
    <source>
        <strain>cv. Columbia</strain>
    </source>
</reference>
<comment type="function">
    <text evidence="1">Cleaves the thylakoid-transfer domain from a chloroplast protein.</text>
</comment>
<comment type="catalytic activity">
    <reaction>
        <text>Cleavage of hydrophobic, N-terminal signal or leader sequences from secreted and periplasmic proteins.</text>
        <dbReference type="EC" id="3.4.21.89"/>
    </reaction>
</comment>
<comment type="subcellular location">
    <subcellularLocation>
        <location>Plastid</location>
        <location>Chloroplast thylakoid membrane</location>
        <topology>Single-pass membrane protein</topology>
    </subcellularLocation>
    <text evidence="1">located in the non-appressed lamellae of the thylakoid network.</text>
</comment>
<comment type="similarity">
    <text evidence="4">Belongs to the peptidase S26 family.</text>
</comment>
<sequence>MAIRVTFTYSSYVARSIASSAGTRVGTGDVRSCFETWVRPRFCGHNQIPDIVDKSPGSNTWGPSSGPRARPASSMYSTIAREILEEGCKSPLVLGMISLMNLTGAPQFSGMTGLGISPFKTSSVIPFLRGSKWMPCSIPATLSTDIAEVDRGGKVCDPKVKLELSDKVSNGGNGWVNKLLNICSEDAKAAFTAVTVSLLFRSALAEPKSIPSTSMLPTLDVGDRVIAEKVSYFFRKPEVSDIVIFKAPPILVEHGYSCADVFIKRIVASEGDWVEVCDGKLLVNDTVQAEDFVLEPIDYEMEPMFVPEGYVFVLGDNRNKSFDSHNWGPLPIKNIIGRSVFRYWPPSKVSDIIHHEQVSQKRAVDVS</sequence>
<accession>Q9M9Z2</accession>
<accession>Q8LEC9</accession>
<protein>
    <recommendedName>
        <fullName>Probable thylakoidal processing peptidase 2, chloroplastic</fullName>
        <ecNumber>3.4.21.89</ecNumber>
    </recommendedName>
    <alternativeName>
        <fullName>Signal peptidase I-2</fullName>
    </alternativeName>
</protein>
<gene>
    <name type="primary">TPP2</name>
    <name type="ordered locus">At1g06870</name>
    <name type="ORF">F4H5.6</name>
</gene>
<name>TPP2_ARATH</name>
<evidence type="ECO:0000250" key="1"/>
<evidence type="ECO:0000255" key="2"/>
<evidence type="ECO:0000256" key="3">
    <source>
        <dbReference type="SAM" id="MobiDB-lite"/>
    </source>
</evidence>
<evidence type="ECO:0000305" key="4"/>
<organism>
    <name type="scientific">Arabidopsis thaliana</name>
    <name type="common">Mouse-ear cress</name>
    <dbReference type="NCBI Taxonomy" id="3702"/>
    <lineage>
        <taxon>Eukaryota</taxon>
        <taxon>Viridiplantae</taxon>
        <taxon>Streptophyta</taxon>
        <taxon>Embryophyta</taxon>
        <taxon>Tracheophyta</taxon>
        <taxon>Spermatophyta</taxon>
        <taxon>Magnoliopsida</taxon>
        <taxon>eudicotyledons</taxon>
        <taxon>Gunneridae</taxon>
        <taxon>Pentapetalae</taxon>
        <taxon>rosids</taxon>
        <taxon>malvids</taxon>
        <taxon>Brassicales</taxon>
        <taxon>Brassicaceae</taxon>
        <taxon>Camelineae</taxon>
        <taxon>Arabidopsis</taxon>
    </lineage>
</organism>
<dbReference type="EC" id="3.4.21.89"/>
<dbReference type="EMBL" id="AC011001">
    <property type="protein sequence ID" value="AAF63136.1"/>
    <property type="molecule type" value="Genomic_DNA"/>
</dbReference>
<dbReference type="EMBL" id="CP002684">
    <property type="protein sequence ID" value="AEE28047.1"/>
    <property type="molecule type" value="Genomic_DNA"/>
</dbReference>
<dbReference type="EMBL" id="AY085489">
    <property type="protein sequence ID" value="AAM62715.1"/>
    <property type="molecule type" value="mRNA"/>
</dbReference>
<dbReference type="EMBL" id="BT024745">
    <property type="protein sequence ID" value="ABD59083.1"/>
    <property type="molecule type" value="mRNA"/>
</dbReference>
<dbReference type="PIR" id="E86203">
    <property type="entry name" value="E86203"/>
</dbReference>
<dbReference type="RefSeq" id="NP_172171.1">
    <property type="nucleotide sequence ID" value="NM_100563.4"/>
</dbReference>
<dbReference type="SMR" id="Q9M9Z2"/>
<dbReference type="FunCoup" id="Q9M9Z2">
    <property type="interactions" value="688"/>
</dbReference>
<dbReference type="STRING" id="3702.Q9M9Z2"/>
<dbReference type="ChEMBL" id="CHEMBL1932907"/>
<dbReference type="MEROPS" id="S26.A01"/>
<dbReference type="iPTMnet" id="Q9M9Z2"/>
<dbReference type="PaxDb" id="3702-AT1G06870.1"/>
<dbReference type="ProteomicsDB" id="234446"/>
<dbReference type="EnsemblPlants" id="AT1G06870.1">
    <property type="protein sequence ID" value="AT1G06870.1"/>
    <property type="gene ID" value="AT1G06870"/>
</dbReference>
<dbReference type="GeneID" id="837198"/>
<dbReference type="Gramene" id="AT1G06870.1">
    <property type="protein sequence ID" value="AT1G06870.1"/>
    <property type="gene ID" value="AT1G06870"/>
</dbReference>
<dbReference type="KEGG" id="ath:AT1G06870"/>
<dbReference type="Araport" id="AT1G06870"/>
<dbReference type="TAIR" id="AT1G06870">
    <property type="gene designation" value="PLSP2A"/>
</dbReference>
<dbReference type="eggNOG" id="KOG0171">
    <property type="taxonomic scope" value="Eukaryota"/>
</dbReference>
<dbReference type="HOGENOM" id="CLU_025235_0_0_1"/>
<dbReference type="InParanoid" id="Q9M9Z2"/>
<dbReference type="OMA" id="FGNGWVN"/>
<dbReference type="PhylomeDB" id="Q9M9Z2"/>
<dbReference type="PRO" id="PR:Q9M9Z2"/>
<dbReference type="Proteomes" id="UP000006548">
    <property type="component" value="Chromosome 1"/>
</dbReference>
<dbReference type="ExpressionAtlas" id="Q9M9Z2">
    <property type="expression patterns" value="baseline and differential"/>
</dbReference>
<dbReference type="GO" id="GO:0009535">
    <property type="term" value="C:chloroplast thylakoid membrane"/>
    <property type="evidence" value="ECO:0007669"/>
    <property type="project" value="UniProtKB-SubCell"/>
</dbReference>
<dbReference type="GO" id="GO:0004252">
    <property type="term" value="F:serine-type endopeptidase activity"/>
    <property type="evidence" value="ECO:0007669"/>
    <property type="project" value="UniProtKB-EC"/>
</dbReference>
<dbReference type="GO" id="GO:0006465">
    <property type="term" value="P:signal peptide processing"/>
    <property type="evidence" value="ECO:0007669"/>
    <property type="project" value="InterPro"/>
</dbReference>
<dbReference type="CDD" id="cd06530">
    <property type="entry name" value="S26_SPase_I"/>
    <property type="match status" value="1"/>
</dbReference>
<dbReference type="FunFam" id="2.10.109.10:FF:000012">
    <property type="entry name" value="Peptidase/ serine-type peptidase"/>
    <property type="match status" value="1"/>
</dbReference>
<dbReference type="Gene3D" id="2.10.109.10">
    <property type="entry name" value="Umud Fragment, subunit A"/>
    <property type="match status" value="1"/>
</dbReference>
<dbReference type="InterPro" id="IPR036286">
    <property type="entry name" value="LexA/Signal_pep-like_sf"/>
</dbReference>
<dbReference type="InterPro" id="IPR000223">
    <property type="entry name" value="Pept_S26A_signal_pept_1"/>
</dbReference>
<dbReference type="InterPro" id="IPR019758">
    <property type="entry name" value="Pept_S26A_signal_pept_1_CS"/>
</dbReference>
<dbReference type="InterPro" id="IPR019756">
    <property type="entry name" value="Pept_S26A_signal_pept_1_Ser-AS"/>
</dbReference>
<dbReference type="InterPro" id="IPR019533">
    <property type="entry name" value="Peptidase_S26"/>
</dbReference>
<dbReference type="NCBIfam" id="TIGR02227">
    <property type="entry name" value="sigpep_I_bact"/>
    <property type="match status" value="1"/>
</dbReference>
<dbReference type="PANTHER" id="PTHR43390">
    <property type="entry name" value="SIGNAL PEPTIDASE I"/>
    <property type="match status" value="1"/>
</dbReference>
<dbReference type="PANTHER" id="PTHR43390:SF2">
    <property type="entry name" value="THYLAKOIDAL PROCESSING PEPTIDASE 2, CHLOROPLASTIC-RELATED"/>
    <property type="match status" value="1"/>
</dbReference>
<dbReference type="Pfam" id="PF10502">
    <property type="entry name" value="Peptidase_S26"/>
    <property type="match status" value="1"/>
</dbReference>
<dbReference type="PRINTS" id="PR00727">
    <property type="entry name" value="LEADERPTASE"/>
</dbReference>
<dbReference type="SUPFAM" id="SSF51306">
    <property type="entry name" value="LexA/Signal peptidase"/>
    <property type="match status" value="1"/>
</dbReference>
<dbReference type="PROSITE" id="PS00501">
    <property type="entry name" value="SPASE_I_1"/>
    <property type="match status" value="1"/>
</dbReference>
<dbReference type="PROSITE" id="PS00761">
    <property type="entry name" value="SPASE_I_3"/>
    <property type="match status" value="1"/>
</dbReference>
<proteinExistence type="evidence at transcript level"/>
<feature type="transit peptide" description="Chloroplast" evidence="2">
    <location>
        <begin position="1"/>
        <end position="68"/>
    </location>
</feature>
<feature type="transit peptide" description="Thylakoid" evidence="2">
    <location>
        <begin position="69"/>
        <end status="unknown"/>
    </location>
</feature>
<feature type="chain" id="PRO_0000310735" description="Probable thylakoidal processing peptidase 2, chloroplastic">
    <location>
        <begin status="unknown"/>
        <end position="367"/>
    </location>
</feature>
<feature type="transmembrane region" description="Helical" evidence="2">
    <location>
        <begin position="185"/>
        <end position="205"/>
    </location>
</feature>
<feature type="topological domain" description="Lumenal, thylakoid" evidence="2">
    <location>
        <begin position="206"/>
        <end position="367"/>
    </location>
</feature>
<feature type="region of interest" description="Disordered" evidence="3">
    <location>
        <begin position="53"/>
        <end position="72"/>
    </location>
</feature>
<feature type="compositionally biased region" description="Low complexity" evidence="3">
    <location>
        <begin position="62"/>
        <end position="72"/>
    </location>
</feature>
<feature type="active site" evidence="1">
    <location>
        <position position="214"/>
    </location>
</feature>
<feature type="sequence conflict" description="In Ref. 3; AAM62715." evidence="4" ref="3">
    <original>M</original>
    <variation>V</variation>
    <location>
        <position position="111"/>
    </location>
</feature>
<feature type="sequence conflict" description="In Ref. 3; AAM62715." evidence="4" ref="3">
    <original>V</original>
    <variation>F</variation>
    <location>
        <position position="196"/>
    </location>
</feature>
<keyword id="KW-0150">Chloroplast</keyword>
<keyword id="KW-0378">Hydrolase</keyword>
<keyword id="KW-0472">Membrane</keyword>
<keyword id="KW-0934">Plastid</keyword>
<keyword id="KW-0645">Protease</keyword>
<keyword id="KW-1185">Reference proteome</keyword>
<keyword id="KW-0793">Thylakoid</keyword>
<keyword id="KW-0809">Transit peptide</keyword>
<keyword id="KW-0812">Transmembrane</keyword>
<keyword id="KW-1133">Transmembrane helix</keyword>